<reference key="1">
    <citation type="submission" date="2007-10" db="EMBL/GenBank/DDBJ databases">
        <title>Complete sequence of Caldivirga maquilingensis IC-167.</title>
        <authorList>
            <consortium name="US DOE Joint Genome Institute"/>
            <person name="Copeland A."/>
            <person name="Lucas S."/>
            <person name="Lapidus A."/>
            <person name="Barry K."/>
            <person name="Glavina del Rio T."/>
            <person name="Dalin E."/>
            <person name="Tice H."/>
            <person name="Pitluck S."/>
            <person name="Saunders E."/>
            <person name="Brettin T."/>
            <person name="Bruce D."/>
            <person name="Detter J.C."/>
            <person name="Han C."/>
            <person name="Schmutz J."/>
            <person name="Larimer F."/>
            <person name="Land M."/>
            <person name="Hauser L."/>
            <person name="Kyrpides N."/>
            <person name="Ivanova N."/>
            <person name="Biddle J.F."/>
            <person name="Zhang Z."/>
            <person name="Fitz-Gibbon S.T."/>
            <person name="Lowe T.M."/>
            <person name="Saltikov C."/>
            <person name="House C.H."/>
            <person name="Richardson P."/>
        </authorList>
    </citation>
    <scope>NUCLEOTIDE SEQUENCE [LARGE SCALE GENOMIC DNA]</scope>
    <source>
        <strain>ATCC 700844 / DSM 13496 / JCM 10307 / IC-167</strain>
    </source>
</reference>
<gene>
    <name evidence="1" type="primary">panB</name>
    <name type="ordered locus">Cmaq_1782</name>
</gene>
<proteinExistence type="inferred from homology"/>
<accession>A8MAX6</accession>
<sequence>MERRKVTIRYFLESKGKRRIAMITAYDYPTARLVDEAGVDGILVGDSLGMVVLGYESTIPVTLTDMLIHVAAVARAKPKALLVADMPFMTYETGPRDALKNASKLIRAGAEAVKPEGGLEIVRIVERLTKAGIPVMGHIGLNPQRVLTLGGFRMMGRTEEQRRKILEDAKALEEAGAFALVIEFVPAGLAREVTESVKIPTICIGAGPYCDGQILVLHDVIGLSEKPPSFAKRYADVASIIRNAVSNYVNEVKESKFPSPEYYKE</sequence>
<feature type="chain" id="PRO_1000076819" description="3-methyl-2-oxobutanoate hydroxymethyltransferase">
    <location>
        <begin position="1"/>
        <end position="265"/>
    </location>
</feature>
<feature type="active site" description="Proton acceptor" evidence="1">
    <location>
        <position position="183"/>
    </location>
</feature>
<feature type="binding site" evidence="1">
    <location>
        <begin position="46"/>
        <end position="47"/>
    </location>
    <ligand>
        <name>3-methyl-2-oxobutanoate</name>
        <dbReference type="ChEBI" id="CHEBI:11851"/>
    </ligand>
</feature>
<feature type="binding site" evidence="1">
    <location>
        <position position="46"/>
    </location>
    <ligand>
        <name>Mg(2+)</name>
        <dbReference type="ChEBI" id="CHEBI:18420"/>
    </ligand>
</feature>
<feature type="binding site" evidence="1">
    <location>
        <position position="85"/>
    </location>
    <ligand>
        <name>3-methyl-2-oxobutanoate</name>
        <dbReference type="ChEBI" id="CHEBI:11851"/>
    </ligand>
</feature>
<feature type="binding site" evidence="1">
    <location>
        <position position="85"/>
    </location>
    <ligand>
        <name>Mg(2+)</name>
        <dbReference type="ChEBI" id="CHEBI:18420"/>
    </ligand>
</feature>
<feature type="binding site" evidence="1">
    <location>
        <position position="114"/>
    </location>
    <ligand>
        <name>3-methyl-2-oxobutanoate</name>
        <dbReference type="ChEBI" id="CHEBI:11851"/>
    </ligand>
</feature>
<feature type="binding site" evidence="1">
    <location>
        <position position="116"/>
    </location>
    <ligand>
        <name>Mg(2+)</name>
        <dbReference type="ChEBI" id="CHEBI:18420"/>
    </ligand>
</feature>
<name>PANB_CALMQ</name>
<organism>
    <name type="scientific">Caldivirga maquilingensis (strain ATCC 700844 / DSM 13496 / JCM 10307 / IC-167)</name>
    <dbReference type="NCBI Taxonomy" id="397948"/>
    <lineage>
        <taxon>Archaea</taxon>
        <taxon>Thermoproteota</taxon>
        <taxon>Thermoprotei</taxon>
        <taxon>Thermoproteales</taxon>
        <taxon>Thermoproteaceae</taxon>
        <taxon>Caldivirga</taxon>
    </lineage>
</organism>
<evidence type="ECO:0000255" key="1">
    <source>
        <dbReference type="HAMAP-Rule" id="MF_00156"/>
    </source>
</evidence>
<dbReference type="EC" id="2.1.2.11" evidence="1"/>
<dbReference type="EMBL" id="CP000852">
    <property type="protein sequence ID" value="ABW02605.1"/>
    <property type="molecule type" value="Genomic_DNA"/>
</dbReference>
<dbReference type="RefSeq" id="WP_012186824.1">
    <property type="nucleotide sequence ID" value="NC_009954.1"/>
</dbReference>
<dbReference type="SMR" id="A8MAX6"/>
<dbReference type="STRING" id="397948.Cmaq_1782"/>
<dbReference type="GeneID" id="5708790"/>
<dbReference type="KEGG" id="cma:Cmaq_1782"/>
<dbReference type="eggNOG" id="arCOG00584">
    <property type="taxonomic scope" value="Archaea"/>
</dbReference>
<dbReference type="HOGENOM" id="CLU_036645_1_0_2"/>
<dbReference type="OrthoDB" id="8414at2157"/>
<dbReference type="UniPathway" id="UPA00241"/>
<dbReference type="Proteomes" id="UP000001137">
    <property type="component" value="Chromosome"/>
</dbReference>
<dbReference type="GO" id="GO:0005737">
    <property type="term" value="C:cytoplasm"/>
    <property type="evidence" value="ECO:0007669"/>
    <property type="project" value="UniProtKB-SubCell"/>
</dbReference>
<dbReference type="GO" id="GO:0003864">
    <property type="term" value="F:3-methyl-2-oxobutanoate hydroxymethyltransferase activity"/>
    <property type="evidence" value="ECO:0007669"/>
    <property type="project" value="UniProtKB-UniRule"/>
</dbReference>
<dbReference type="GO" id="GO:0000287">
    <property type="term" value="F:magnesium ion binding"/>
    <property type="evidence" value="ECO:0007669"/>
    <property type="project" value="TreeGrafter"/>
</dbReference>
<dbReference type="GO" id="GO:0015937">
    <property type="term" value="P:coenzyme A biosynthetic process"/>
    <property type="evidence" value="ECO:0007669"/>
    <property type="project" value="UniProtKB-UniRule"/>
</dbReference>
<dbReference type="GO" id="GO:0015940">
    <property type="term" value="P:pantothenate biosynthetic process"/>
    <property type="evidence" value="ECO:0007669"/>
    <property type="project" value="InterPro"/>
</dbReference>
<dbReference type="CDD" id="cd06557">
    <property type="entry name" value="KPHMT-like"/>
    <property type="match status" value="1"/>
</dbReference>
<dbReference type="FunFam" id="3.20.20.60:FF:000003">
    <property type="entry name" value="3-methyl-2-oxobutanoate hydroxymethyltransferase"/>
    <property type="match status" value="1"/>
</dbReference>
<dbReference type="Gene3D" id="3.20.20.60">
    <property type="entry name" value="Phosphoenolpyruvate-binding domains"/>
    <property type="match status" value="1"/>
</dbReference>
<dbReference type="HAMAP" id="MF_00156">
    <property type="entry name" value="PanB"/>
    <property type="match status" value="1"/>
</dbReference>
<dbReference type="InterPro" id="IPR003700">
    <property type="entry name" value="Pantoate_hydroxy_MeTrfase"/>
</dbReference>
<dbReference type="InterPro" id="IPR015813">
    <property type="entry name" value="Pyrv/PenolPyrv_kinase-like_dom"/>
</dbReference>
<dbReference type="InterPro" id="IPR040442">
    <property type="entry name" value="Pyrv_kinase-like_dom_sf"/>
</dbReference>
<dbReference type="NCBIfam" id="TIGR00222">
    <property type="entry name" value="panB"/>
    <property type="match status" value="1"/>
</dbReference>
<dbReference type="NCBIfam" id="NF001452">
    <property type="entry name" value="PRK00311.1"/>
    <property type="match status" value="1"/>
</dbReference>
<dbReference type="PANTHER" id="PTHR20881">
    <property type="entry name" value="3-METHYL-2-OXOBUTANOATE HYDROXYMETHYLTRANSFERASE"/>
    <property type="match status" value="1"/>
</dbReference>
<dbReference type="PANTHER" id="PTHR20881:SF0">
    <property type="entry name" value="3-METHYL-2-OXOBUTANOATE HYDROXYMETHYLTRANSFERASE"/>
    <property type="match status" value="1"/>
</dbReference>
<dbReference type="Pfam" id="PF02548">
    <property type="entry name" value="Pantoate_transf"/>
    <property type="match status" value="1"/>
</dbReference>
<dbReference type="PIRSF" id="PIRSF000388">
    <property type="entry name" value="Pantoate_hydroxy_MeTrfase"/>
    <property type="match status" value="1"/>
</dbReference>
<dbReference type="SUPFAM" id="SSF51621">
    <property type="entry name" value="Phosphoenolpyruvate/pyruvate domain"/>
    <property type="match status" value="1"/>
</dbReference>
<protein>
    <recommendedName>
        <fullName evidence="1">3-methyl-2-oxobutanoate hydroxymethyltransferase</fullName>
        <ecNumber evidence="1">2.1.2.11</ecNumber>
    </recommendedName>
    <alternativeName>
        <fullName evidence="1">Ketopantoate hydroxymethyltransferase</fullName>
        <shortName evidence="1">KPHMT</shortName>
    </alternativeName>
</protein>
<keyword id="KW-0173">Coenzyme A biosynthesis</keyword>
<keyword id="KW-0963">Cytoplasm</keyword>
<keyword id="KW-0460">Magnesium</keyword>
<keyword id="KW-0479">Metal-binding</keyword>
<keyword id="KW-1185">Reference proteome</keyword>
<keyword id="KW-0808">Transferase</keyword>
<comment type="function">
    <text evidence="1">Catalyzes the reversible reaction in which hydroxymethyl group from 5,10-methylenetetrahydrofolate is transferred onto alpha-ketoisovalerate to form ketopantoate.</text>
</comment>
<comment type="catalytic activity">
    <reaction evidence="1">
        <text>3-methyl-2-oxobutanoate + (6R)-5,10-methylene-5,6,7,8-tetrahydrofolate + H2O = 2-dehydropantoate + (6S)-5,6,7,8-tetrahydrofolate</text>
        <dbReference type="Rhea" id="RHEA:11824"/>
        <dbReference type="ChEBI" id="CHEBI:11561"/>
        <dbReference type="ChEBI" id="CHEBI:11851"/>
        <dbReference type="ChEBI" id="CHEBI:15377"/>
        <dbReference type="ChEBI" id="CHEBI:15636"/>
        <dbReference type="ChEBI" id="CHEBI:57453"/>
        <dbReference type="EC" id="2.1.2.11"/>
    </reaction>
</comment>
<comment type="cofactor">
    <cofactor evidence="1">
        <name>Mg(2+)</name>
        <dbReference type="ChEBI" id="CHEBI:18420"/>
    </cofactor>
    <text evidence="1">Binds 1 Mg(2+) ion per subunit.</text>
</comment>
<comment type="pathway">
    <text evidence="1">Cofactor biosynthesis; coenzyme A biosynthesis.</text>
</comment>
<comment type="subunit">
    <text evidence="1">Homodecamer; pentamer of dimers.</text>
</comment>
<comment type="subcellular location">
    <subcellularLocation>
        <location evidence="1">Cytoplasm</location>
    </subcellularLocation>
</comment>
<comment type="similarity">
    <text evidence="1">Belongs to the PanB family.</text>
</comment>